<protein>
    <recommendedName>
        <fullName>CRP-like protein Clp</fullName>
    </recommendedName>
    <alternativeName>
        <fullName>Catabolite activation-like protein</fullName>
        <shortName>CAP-like</shortName>
    </alternativeName>
</protein>
<reference key="1">
    <citation type="journal article" date="2008" name="BMC Genomics">
        <title>Genome sequence and rapid evolution of the rice pathogen Xanthomonas oryzae pv. oryzae PXO99A.</title>
        <authorList>
            <person name="Salzberg S.L."/>
            <person name="Sommer D.D."/>
            <person name="Schatz M.C."/>
            <person name="Phillippy A.M."/>
            <person name="Rabinowicz P.D."/>
            <person name="Tsuge S."/>
            <person name="Furutani A."/>
            <person name="Ochiai H."/>
            <person name="Delcher A.L."/>
            <person name="Kelley D."/>
            <person name="Madupu R."/>
            <person name="Puiu D."/>
            <person name="Radune D."/>
            <person name="Shumway M."/>
            <person name="Trapnell C."/>
            <person name="Aparna G."/>
            <person name="Jha G."/>
            <person name="Pandey A."/>
            <person name="Patil P.B."/>
            <person name="Ishihara H."/>
            <person name="Meyer D.F."/>
            <person name="Szurek B."/>
            <person name="Verdier V."/>
            <person name="Koebnik R."/>
            <person name="Dow J.M."/>
            <person name="Ryan R.P."/>
            <person name="Hirata H."/>
            <person name="Tsuyumu S."/>
            <person name="Won Lee S."/>
            <person name="Seo Y.-S."/>
            <person name="Sriariyanum M."/>
            <person name="Ronald P.C."/>
            <person name="Sonti R.V."/>
            <person name="Van Sluys M.-A."/>
            <person name="Leach J.E."/>
            <person name="White F.F."/>
            <person name="Bogdanove A.J."/>
        </authorList>
    </citation>
    <scope>NUCLEOTIDE SEQUENCE [LARGE SCALE GENOMIC DNA]</scope>
    <source>
        <strain>PXO99A</strain>
    </source>
</reference>
<dbReference type="EMBL" id="CP000967">
    <property type="protein sequence ID" value="ACD57282.1"/>
    <property type="status" value="ALT_INIT"/>
    <property type="molecule type" value="Genomic_DNA"/>
</dbReference>
<dbReference type="SMR" id="B2SL05"/>
<dbReference type="KEGG" id="xop:PXO_04006"/>
<dbReference type="eggNOG" id="COG0664">
    <property type="taxonomic scope" value="Bacteria"/>
</dbReference>
<dbReference type="HOGENOM" id="CLU_075053_3_5_6"/>
<dbReference type="Proteomes" id="UP000001740">
    <property type="component" value="Chromosome"/>
</dbReference>
<dbReference type="GO" id="GO:0005829">
    <property type="term" value="C:cytosol"/>
    <property type="evidence" value="ECO:0007669"/>
    <property type="project" value="TreeGrafter"/>
</dbReference>
<dbReference type="GO" id="GO:0003824">
    <property type="term" value="F:catalytic activity"/>
    <property type="evidence" value="ECO:0007669"/>
    <property type="project" value="UniProtKB-KW"/>
</dbReference>
<dbReference type="GO" id="GO:0035438">
    <property type="term" value="F:cyclic-di-GMP binding"/>
    <property type="evidence" value="ECO:0000250"/>
    <property type="project" value="UniProtKB"/>
</dbReference>
<dbReference type="GO" id="GO:0003677">
    <property type="term" value="F:DNA binding"/>
    <property type="evidence" value="ECO:0000250"/>
    <property type="project" value="UniProtKB"/>
</dbReference>
<dbReference type="GO" id="GO:0003700">
    <property type="term" value="F:DNA-binding transcription factor activity"/>
    <property type="evidence" value="ECO:0000250"/>
    <property type="project" value="UniProtKB"/>
</dbReference>
<dbReference type="GO" id="GO:0046983">
    <property type="term" value="F:protein dimerization activity"/>
    <property type="evidence" value="ECO:0000250"/>
    <property type="project" value="UniProtKB"/>
</dbReference>
<dbReference type="GO" id="GO:0006355">
    <property type="term" value="P:regulation of DNA-templated transcription"/>
    <property type="evidence" value="ECO:0000250"/>
    <property type="project" value="UniProtKB"/>
</dbReference>
<dbReference type="CDD" id="cd00038">
    <property type="entry name" value="CAP_ED"/>
    <property type="match status" value="1"/>
</dbReference>
<dbReference type="FunFam" id="1.10.10.10:FF:000006">
    <property type="entry name" value="cAMP-activated global transcriptional regulator CRP"/>
    <property type="match status" value="1"/>
</dbReference>
<dbReference type="FunFam" id="2.60.120.10:FF:000100">
    <property type="entry name" value="CRP-like protein Clp"/>
    <property type="match status" value="1"/>
</dbReference>
<dbReference type="Gene3D" id="2.60.120.10">
    <property type="entry name" value="Jelly Rolls"/>
    <property type="match status" value="1"/>
</dbReference>
<dbReference type="Gene3D" id="1.10.10.10">
    <property type="entry name" value="Winged helix-like DNA-binding domain superfamily/Winged helix DNA-binding domain"/>
    <property type="match status" value="1"/>
</dbReference>
<dbReference type="InterPro" id="IPR000595">
    <property type="entry name" value="cNMP-bd_dom"/>
</dbReference>
<dbReference type="InterPro" id="IPR018490">
    <property type="entry name" value="cNMP-bd_dom_sf"/>
</dbReference>
<dbReference type="InterPro" id="IPR050397">
    <property type="entry name" value="Env_Response_Regulators"/>
</dbReference>
<dbReference type="InterPro" id="IPR012318">
    <property type="entry name" value="HTH_CRP"/>
</dbReference>
<dbReference type="InterPro" id="IPR014710">
    <property type="entry name" value="RmlC-like_jellyroll"/>
</dbReference>
<dbReference type="InterPro" id="IPR018335">
    <property type="entry name" value="Tscrpt_reg_HTH_Crp-type_CS"/>
</dbReference>
<dbReference type="InterPro" id="IPR036388">
    <property type="entry name" value="WH-like_DNA-bd_sf"/>
</dbReference>
<dbReference type="InterPro" id="IPR036390">
    <property type="entry name" value="WH_DNA-bd_sf"/>
</dbReference>
<dbReference type="NCBIfam" id="NF008732">
    <property type="entry name" value="PRK11753.1"/>
    <property type="match status" value="1"/>
</dbReference>
<dbReference type="PANTHER" id="PTHR24567">
    <property type="entry name" value="CRP FAMILY TRANSCRIPTIONAL REGULATORY PROTEIN"/>
    <property type="match status" value="1"/>
</dbReference>
<dbReference type="PANTHER" id="PTHR24567:SF68">
    <property type="entry name" value="DNA-BINDING TRANSCRIPTIONAL DUAL REGULATOR CRP"/>
    <property type="match status" value="1"/>
</dbReference>
<dbReference type="Pfam" id="PF00027">
    <property type="entry name" value="cNMP_binding"/>
    <property type="match status" value="1"/>
</dbReference>
<dbReference type="Pfam" id="PF00325">
    <property type="entry name" value="Crp"/>
    <property type="match status" value="1"/>
</dbReference>
<dbReference type="PRINTS" id="PR00034">
    <property type="entry name" value="HTHCRP"/>
</dbReference>
<dbReference type="SMART" id="SM00100">
    <property type="entry name" value="cNMP"/>
    <property type="match status" value="1"/>
</dbReference>
<dbReference type="SMART" id="SM00419">
    <property type="entry name" value="HTH_CRP"/>
    <property type="match status" value="1"/>
</dbReference>
<dbReference type="SUPFAM" id="SSF51206">
    <property type="entry name" value="cAMP-binding domain-like"/>
    <property type="match status" value="1"/>
</dbReference>
<dbReference type="SUPFAM" id="SSF46785">
    <property type="entry name" value="Winged helix' DNA-binding domain"/>
    <property type="match status" value="1"/>
</dbReference>
<dbReference type="PROSITE" id="PS50042">
    <property type="entry name" value="CNMP_BINDING_3"/>
    <property type="match status" value="1"/>
</dbReference>
<dbReference type="PROSITE" id="PS00042">
    <property type="entry name" value="HTH_CRP_1"/>
    <property type="match status" value="1"/>
</dbReference>
<dbReference type="PROSITE" id="PS51063">
    <property type="entry name" value="HTH_CRP_2"/>
    <property type="match status" value="1"/>
</dbReference>
<proteinExistence type="inferred from homology"/>
<name>CLP_XANOP</name>
<feature type="chain" id="PRO_0000405707" description="CRP-like protein Clp">
    <location>
        <begin position="1"/>
        <end position="230"/>
    </location>
</feature>
<feature type="domain" description="HTH crp-type" evidence="2">
    <location>
        <begin position="158"/>
        <end position="230"/>
    </location>
</feature>
<feature type="DNA-binding region" description="H-T-H motif" evidence="2">
    <location>
        <begin position="190"/>
        <end position="209"/>
    </location>
</feature>
<feature type="binding site">
    <location>
        <begin position="18"/>
        <end position="139"/>
    </location>
    <ligand>
        <name>a nucleoside 3',5'-cyclic phosphate</name>
        <dbReference type="ChEBI" id="CHEBI:58464"/>
    </ligand>
</feature>
<gene>
    <name type="primary">clp</name>
    <name type="ordered locus">PXO_04006</name>
</gene>
<evidence type="ECO:0000250" key="1"/>
<evidence type="ECO:0000255" key="2">
    <source>
        <dbReference type="PROSITE-ProRule" id="PRU00387"/>
    </source>
</evidence>
<evidence type="ECO:0000305" key="3"/>
<sequence>MSSANTTVVTTTVRNATPSLALDAGTIERFLAHSHRRRYPTRTDVFRPGDPAGTLYYVISGSVSIIAEEDDDRELVLGYFGSGEFVGEMGLFIESDTREVILRTRTQCELAEISYERLQQLFQTSLSPDAPKILYAIGVQLSKRLLDTTRKASRLAFLDVTDRIVRTLHDLSKEPEAMSHPQGTQLRVSRQELARLVGCSREMAGRVLKKLQADGLLHARGKTVVLYGTR</sequence>
<organism>
    <name type="scientific">Xanthomonas oryzae pv. oryzae (strain PXO99A)</name>
    <dbReference type="NCBI Taxonomy" id="360094"/>
    <lineage>
        <taxon>Bacteria</taxon>
        <taxon>Pseudomonadati</taxon>
        <taxon>Pseudomonadota</taxon>
        <taxon>Gammaproteobacteria</taxon>
        <taxon>Lysobacterales</taxon>
        <taxon>Lysobacteraceae</taxon>
        <taxon>Xanthomonas</taxon>
    </lineage>
</organism>
<keyword id="KW-0010">Activator</keyword>
<keyword id="KW-0021">Allosteric enzyme</keyword>
<keyword id="KW-0973">c-di-GMP</keyword>
<keyword id="KW-0963">Cytoplasm</keyword>
<keyword id="KW-0238">DNA-binding</keyword>
<keyword id="KW-0678">Repressor</keyword>
<keyword id="KW-0804">Transcription</keyword>
<keyword id="KW-0805">Transcription regulation</keyword>
<keyword id="KW-0843">Virulence</keyword>
<accession>B2SL05</accession>
<comment type="function">
    <text evidence="1">Global transcriptional regulator that regulates virulence factors production by activating or repressing the expression of a large set of genes in diffusible signal factor (DSF) pathway.</text>
</comment>
<comment type="activity regulation">
    <text evidence="1">Allosterically inhibited by cyclic di-GMP (c-di-GMP), which binds to Clp and abolishes its ability to bind its target gene promoter.</text>
</comment>
<comment type="subunit">
    <text evidence="1">Homodimer.</text>
</comment>
<comment type="subcellular location">
    <subcellularLocation>
        <location evidence="3">Cytoplasm</location>
    </subcellularLocation>
</comment>
<comment type="domain">
    <text evidence="1">Binding of c-di-GMP appears to trigger the active Clp conformation into an open form or inactive state, hence abolishing its DNA-binding ability.</text>
</comment>
<comment type="sequence caution" evidence="3">
    <conflict type="erroneous initiation">
        <sequence resource="EMBL-CDS" id="ACD57282"/>
    </conflict>
    <text>Truncated N-terminus.</text>
</comment>